<sequence>MEKALILSIFIFSLLLGITSYSIYISFGPLSKTLRDPFEEHEE</sequence>
<comment type="function">
    <text evidence="1">May play a role in photosystem I and II biogenesis.</text>
</comment>
<comment type="subcellular location">
    <subcellularLocation>
        <location evidence="1">Plastid</location>
        <location evidence="1">Chloroplast thylakoid membrane</location>
        <topology evidence="1">Single-pass membrane protein</topology>
    </subcellularLocation>
</comment>
<comment type="similarity">
    <text evidence="1">Belongs to the PsbN family.</text>
</comment>
<comment type="caution">
    <text evidence="1">Originally thought to be a component of PSII; based on experiments in Synechocystis, N.tabacum and barley, and its absence from PSII in T.elongatus and T.vulcanus, this is probably not true.</text>
</comment>
<geneLocation type="chloroplast"/>
<gene>
    <name evidence="1" type="primary">psbN</name>
</gene>
<proteinExistence type="inferred from homology"/>
<dbReference type="EMBL" id="AF022186">
    <property type="protein sequence ID" value="AAB82663.1"/>
    <property type="molecule type" value="Genomic_DNA"/>
</dbReference>
<dbReference type="PIR" id="T11994">
    <property type="entry name" value="T11994"/>
</dbReference>
<dbReference type="RefSeq" id="NP_045098.1">
    <property type="nucleotide sequence ID" value="NC_001840.1"/>
</dbReference>
<dbReference type="SMR" id="O19926"/>
<dbReference type="GeneID" id="800120"/>
<dbReference type="GO" id="GO:0009535">
    <property type="term" value="C:chloroplast thylakoid membrane"/>
    <property type="evidence" value="ECO:0007669"/>
    <property type="project" value="UniProtKB-SubCell"/>
</dbReference>
<dbReference type="GO" id="GO:0015979">
    <property type="term" value="P:photosynthesis"/>
    <property type="evidence" value="ECO:0007669"/>
    <property type="project" value="InterPro"/>
</dbReference>
<dbReference type="HAMAP" id="MF_00293">
    <property type="entry name" value="PSII_PsbN"/>
    <property type="match status" value="1"/>
</dbReference>
<dbReference type="InterPro" id="IPR003398">
    <property type="entry name" value="PSII_PsbN"/>
</dbReference>
<dbReference type="PANTHER" id="PTHR35326">
    <property type="entry name" value="PROTEIN PSBN"/>
    <property type="match status" value="1"/>
</dbReference>
<dbReference type="PANTHER" id="PTHR35326:SF3">
    <property type="entry name" value="PROTEIN PSBN"/>
    <property type="match status" value="1"/>
</dbReference>
<dbReference type="Pfam" id="PF02468">
    <property type="entry name" value="PsbN"/>
    <property type="match status" value="1"/>
</dbReference>
<accession>O19926</accession>
<reference key="1">
    <citation type="journal article" date="2000" name="J. Mol. Evol.">
        <title>The structure and gene repertoire of an ancient red algal plastid genome.</title>
        <authorList>
            <person name="Gloeckner G."/>
            <person name="Rosenthal A."/>
            <person name="Valentin K.-U."/>
        </authorList>
    </citation>
    <scope>NUCLEOTIDE SEQUENCE [LARGE SCALE GENOMIC DNA]</scope>
    <source>
        <strain>RK-1</strain>
    </source>
</reference>
<evidence type="ECO:0000255" key="1">
    <source>
        <dbReference type="HAMAP-Rule" id="MF_00293"/>
    </source>
</evidence>
<organism>
    <name type="scientific">Cyanidium caldarium</name>
    <name type="common">Red alga</name>
    <dbReference type="NCBI Taxonomy" id="2771"/>
    <lineage>
        <taxon>Eukaryota</taxon>
        <taxon>Rhodophyta</taxon>
        <taxon>Bangiophyceae</taxon>
        <taxon>Cyanidiales</taxon>
        <taxon>Cyanidiaceae</taxon>
        <taxon>Cyanidium</taxon>
    </lineage>
</organism>
<keyword id="KW-0150">Chloroplast</keyword>
<keyword id="KW-0472">Membrane</keyword>
<keyword id="KW-0934">Plastid</keyword>
<keyword id="KW-0793">Thylakoid</keyword>
<keyword id="KW-0812">Transmembrane</keyword>
<keyword id="KW-1133">Transmembrane helix</keyword>
<protein>
    <recommendedName>
        <fullName evidence="1">Protein PsbN</fullName>
    </recommendedName>
</protein>
<feature type="chain" id="PRO_0000207891" description="Protein PsbN">
    <location>
        <begin position="1"/>
        <end position="43"/>
    </location>
</feature>
<feature type="transmembrane region" description="Helical" evidence="1">
    <location>
        <begin position="5"/>
        <end position="25"/>
    </location>
</feature>
<name>PSBN_CYACA</name>